<comment type="function">
    <text evidence="1">Functions in the N-end rule pathway of protein degradation where it conjugates Leu, Phe and, less efficiently, Met from aminoacyl-tRNAs to the N-termini of proteins containing an N-terminal arginine or lysine.</text>
</comment>
<comment type="catalytic activity">
    <reaction evidence="1">
        <text>N-terminal L-lysyl-[protein] + L-leucyl-tRNA(Leu) = N-terminal L-leucyl-L-lysyl-[protein] + tRNA(Leu) + H(+)</text>
        <dbReference type="Rhea" id="RHEA:12340"/>
        <dbReference type="Rhea" id="RHEA-COMP:9613"/>
        <dbReference type="Rhea" id="RHEA-COMP:9622"/>
        <dbReference type="Rhea" id="RHEA-COMP:12670"/>
        <dbReference type="Rhea" id="RHEA-COMP:12671"/>
        <dbReference type="ChEBI" id="CHEBI:15378"/>
        <dbReference type="ChEBI" id="CHEBI:65249"/>
        <dbReference type="ChEBI" id="CHEBI:78442"/>
        <dbReference type="ChEBI" id="CHEBI:78494"/>
        <dbReference type="ChEBI" id="CHEBI:133043"/>
        <dbReference type="EC" id="2.3.2.6"/>
    </reaction>
</comment>
<comment type="catalytic activity">
    <reaction evidence="1">
        <text>N-terminal L-arginyl-[protein] + L-leucyl-tRNA(Leu) = N-terminal L-leucyl-L-arginyl-[protein] + tRNA(Leu) + H(+)</text>
        <dbReference type="Rhea" id="RHEA:50416"/>
        <dbReference type="Rhea" id="RHEA-COMP:9613"/>
        <dbReference type="Rhea" id="RHEA-COMP:9622"/>
        <dbReference type="Rhea" id="RHEA-COMP:12672"/>
        <dbReference type="Rhea" id="RHEA-COMP:12673"/>
        <dbReference type="ChEBI" id="CHEBI:15378"/>
        <dbReference type="ChEBI" id="CHEBI:64719"/>
        <dbReference type="ChEBI" id="CHEBI:78442"/>
        <dbReference type="ChEBI" id="CHEBI:78494"/>
        <dbReference type="ChEBI" id="CHEBI:133044"/>
        <dbReference type="EC" id="2.3.2.6"/>
    </reaction>
</comment>
<comment type="catalytic activity">
    <reaction evidence="1">
        <text>L-phenylalanyl-tRNA(Phe) + an N-terminal L-alpha-aminoacyl-[protein] = an N-terminal L-phenylalanyl-L-alpha-aminoacyl-[protein] + tRNA(Phe)</text>
        <dbReference type="Rhea" id="RHEA:43632"/>
        <dbReference type="Rhea" id="RHEA-COMP:9668"/>
        <dbReference type="Rhea" id="RHEA-COMP:9699"/>
        <dbReference type="Rhea" id="RHEA-COMP:10636"/>
        <dbReference type="Rhea" id="RHEA-COMP:10637"/>
        <dbReference type="ChEBI" id="CHEBI:78442"/>
        <dbReference type="ChEBI" id="CHEBI:78531"/>
        <dbReference type="ChEBI" id="CHEBI:78597"/>
        <dbReference type="ChEBI" id="CHEBI:83561"/>
        <dbReference type="EC" id="2.3.2.6"/>
    </reaction>
</comment>
<comment type="subcellular location">
    <subcellularLocation>
        <location evidence="1">Cytoplasm</location>
    </subcellularLocation>
</comment>
<comment type="similarity">
    <text evidence="1">Belongs to the L/F-transferase family.</text>
</comment>
<dbReference type="EC" id="2.3.2.6" evidence="1"/>
<dbReference type="EMBL" id="CP001616">
    <property type="protein sequence ID" value="ACQ93914.1"/>
    <property type="molecule type" value="Genomic_DNA"/>
</dbReference>
<dbReference type="RefSeq" id="WP_015879382.1">
    <property type="nucleotide sequence ID" value="NC_012691.1"/>
</dbReference>
<dbReference type="SMR" id="C4L944"/>
<dbReference type="STRING" id="595494.Tola_2317"/>
<dbReference type="KEGG" id="tau:Tola_2317"/>
<dbReference type="eggNOG" id="COG2360">
    <property type="taxonomic scope" value="Bacteria"/>
</dbReference>
<dbReference type="HOGENOM" id="CLU_075045_0_0_6"/>
<dbReference type="OrthoDB" id="9790282at2"/>
<dbReference type="Proteomes" id="UP000009073">
    <property type="component" value="Chromosome"/>
</dbReference>
<dbReference type="GO" id="GO:0005737">
    <property type="term" value="C:cytoplasm"/>
    <property type="evidence" value="ECO:0007669"/>
    <property type="project" value="UniProtKB-SubCell"/>
</dbReference>
<dbReference type="GO" id="GO:0008914">
    <property type="term" value="F:leucyl-tRNA--protein transferase activity"/>
    <property type="evidence" value="ECO:0007669"/>
    <property type="project" value="UniProtKB-UniRule"/>
</dbReference>
<dbReference type="GO" id="GO:0030163">
    <property type="term" value="P:protein catabolic process"/>
    <property type="evidence" value="ECO:0007669"/>
    <property type="project" value="UniProtKB-UniRule"/>
</dbReference>
<dbReference type="FunFam" id="3.30.70.3550:FF:000001">
    <property type="entry name" value="Leucyl/phenylalanyl-tRNA--protein transferase"/>
    <property type="match status" value="1"/>
</dbReference>
<dbReference type="FunFam" id="3.40.630.70:FF:000001">
    <property type="entry name" value="Leucyl/phenylalanyl-tRNA--protein transferase"/>
    <property type="match status" value="1"/>
</dbReference>
<dbReference type="Gene3D" id="3.40.630.70">
    <property type="entry name" value="Leucyl/phenylalanyl-tRNA-protein transferase, C-terminal domain"/>
    <property type="match status" value="1"/>
</dbReference>
<dbReference type="Gene3D" id="3.30.70.3550">
    <property type="entry name" value="Leucyl/phenylalanyl-tRNA-protein transferase, N-terminal domain"/>
    <property type="match status" value="1"/>
</dbReference>
<dbReference type="HAMAP" id="MF_00688">
    <property type="entry name" value="Leu_Phe_trans"/>
    <property type="match status" value="1"/>
</dbReference>
<dbReference type="InterPro" id="IPR016181">
    <property type="entry name" value="Acyl_CoA_acyltransferase"/>
</dbReference>
<dbReference type="InterPro" id="IPR004616">
    <property type="entry name" value="Leu/Phe-tRNA_Trfase"/>
</dbReference>
<dbReference type="InterPro" id="IPR042203">
    <property type="entry name" value="Leu/Phe-tRNA_Trfase_C"/>
</dbReference>
<dbReference type="InterPro" id="IPR042221">
    <property type="entry name" value="Leu/Phe-tRNA_Trfase_N"/>
</dbReference>
<dbReference type="NCBIfam" id="TIGR00667">
    <property type="entry name" value="aat"/>
    <property type="match status" value="1"/>
</dbReference>
<dbReference type="PANTHER" id="PTHR30098">
    <property type="entry name" value="LEUCYL/PHENYLALANYL-TRNA--PROTEIN TRANSFERASE"/>
    <property type="match status" value="1"/>
</dbReference>
<dbReference type="PANTHER" id="PTHR30098:SF2">
    <property type="entry name" value="LEUCYL_PHENYLALANYL-TRNA--PROTEIN TRANSFERASE"/>
    <property type="match status" value="1"/>
</dbReference>
<dbReference type="Pfam" id="PF03588">
    <property type="entry name" value="Leu_Phe_trans"/>
    <property type="match status" value="1"/>
</dbReference>
<dbReference type="SUPFAM" id="SSF55729">
    <property type="entry name" value="Acyl-CoA N-acyltransferases (Nat)"/>
    <property type="match status" value="1"/>
</dbReference>
<feature type="chain" id="PRO_1000212574" description="Leucyl/phenylalanyl-tRNA--protein transferase">
    <location>
        <begin position="1"/>
        <end position="234"/>
    </location>
</feature>
<accession>C4L944</accession>
<organism>
    <name type="scientific">Tolumonas auensis (strain DSM 9187 / NBRC 110442 / TA 4)</name>
    <dbReference type="NCBI Taxonomy" id="595494"/>
    <lineage>
        <taxon>Bacteria</taxon>
        <taxon>Pseudomonadati</taxon>
        <taxon>Pseudomonadota</taxon>
        <taxon>Gammaproteobacteria</taxon>
        <taxon>Aeromonadales</taxon>
        <taxon>Aeromonadaceae</taxon>
        <taxon>Tolumonas</taxon>
    </lineage>
</organism>
<keyword id="KW-0012">Acyltransferase</keyword>
<keyword id="KW-0963">Cytoplasm</keyword>
<keyword id="KW-1185">Reference proteome</keyword>
<keyword id="KW-0808">Transferase</keyword>
<gene>
    <name evidence="1" type="primary">aat</name>
    <name type="ordered locus">Tola_2317</name>
</gene>
<protein>
    <recommendedName>
        <fullName evidence="1">Leucyl/phenylalanyl-tRNA--protein transferase</fullName>
        <ecNumber evidence="1">2.3.2.6</ecNumber>
    </recommendedName>
    <alternativeName>
        <fullName evidence="1">L/F-transferase</fullName>
    </alternativeName>
    <alternativeName>
        <fullName evidence="1">Leucyltransferase</fullName>
    </alternativeName>
    <alternativeName>
        <fullName evidence="1">Phenyalanyltransferase</fullName>
    </alternativeName>
</protein>
<evidence type="ECO:0000255" key="1">
    <source>
        <dbReference type="HAMAP-Rule" id="MF_00688"/>
    </source>
</evidence>
<sequence>MTIYLTELDSTLYFPSPEEALTEPNGLLAIGGDLSPARLLTAYYNGIFPWFSPYQPILWWSPDPRGVLPVAQLHISRSLRKTLNKTSLRFTVNHAFMDVVTACAAPRRYSEDTWITSEFMQSYAVLHEMGQAHSVEVWDNDQLVGGLYGLSVGKLFCGESMFHRQTDASKLALVALCRHLSRYDAPLIDCQMQNSYLETMGVQEWPRAEFLRQLAQLREQSFPAECWQPQVLTL</sequence>
<proteinExistence type="inferred from homology"/>
<name>LFTR_TOLAT</name>
<reference key="1">
    <citation type="submission" date="2009-05" db="EMBL/GenBank/DDBJ databases">
        <title>Complete sequence of Tolumonas auensis DSM 9187.</title>
        <authorList>
            <consortium name="US DOE Joint Genome Institute"/>
            <person name="Lucas S."/>
            <person name="Copeland A."/>
            <person name="Lapidus A."/>
            <person name="Glavina del Rio T."/>
            <person name="Tice H."/>
            <person name="Bruce D."/>
            <person name="Goodwin L."/>
            <person name="Pitluck S."/>
            <person name="Chertkov O."/>
            <person name="Brettin T."/>
            <person name="Detter J.C."/>
            <person name="Han C."/>
            <person name="Larimer F."/>
            <person name="Land M."/>
            <person name="Hauser L."/>
            <person name="Kyrpides N."/>
            <person name="Mikhailova N."/>
            <person name="Spring S."/>
            <person name="Beller H."/>
        </authorList>
    </citation>
    <scope>NUCLEOTIDE SEQUENCE [LARGE SCALE GENOMIC DNA]</scope>
    <source>
        <strain>DSM 9187 / NBRC 110442 / TA 4</strain>
    </source>
</reference>